<accession>B7UK28</accession>
<keyword id="KW-1185">Reference proteome</keyword>
<keyword id="KW-0687">Ribonucleoprotein</keyword>
<keyword id="KW-0689">Ribosomal protein</keyword>
<keyword id="KW-0694">RNA-binding</keyword>
<keyword id="KW-0699">rRNA-binding</keyword>
<reference key="1">
    <citation type="journal article" date="2009" name="J. Bacteriol.">
        <title>Complete genome sequence and comparative genome analysis of enteropathogenic Escherichia coli O127:H6 strain E2348/69.</title>
        <authorList>
            <person name="Iguchi A."/>
            <person name="Thomson N.R."/>
            <person name="Ogura Y."/>
            <person name="Saunders D."/>
            <person name="Ooka T."/>
            <person name="Henderson I.R."/>
            <person name="Harris D."/>
            <person name="Asadulghani M."/>
            <person name="Kurokawa K."/>
            <person name="Dean P."/>
            <person name="Kenny B."/>
            <person name="Quail M.A."/>
            <person name="Thurston S."/>
            <person name="Dougan G."/>
            <person name="Hayashi T."/>
            <person name="Parkhill J."/>
            <person name="Frankel G."/>
        </authorList>
    </citation>
    <scope>NUCLEOTIDE SEQUENCE [LARGE SCALE GENOMIC DNA]</scope>
    <source>
        <strain>E2348/69 / EPEC</strain>
    </source>
</reference>
<name>RL18_ECO27</name>
<evidence type="ECO:0000255" key="1">
    <source>
        <dbReference type="HAMAP-Rule" id="MF_01337"/>
    </source>
</evidence>
<evidence type="ECO:0000305" key="2"/>
<comment type="function">
    <text evidence="1">This is one of the proteins that bind and probably mediate the attachment of the 5S RNA into the large ribosomal subunit, where it forms part of the central protuberance.</text>
</comment>
<comment type="subunit">
    <text evidence="1">Part of the 50S ribosomal subunit; part of the 5S rRNA/L5/L18/L25 subcomplex. Contacts the 5S and 23S rRNAs.</text>
</comment>
<comment type="similarity">
    <text evidence="1">Belongs to the universal ribosomal protein uL18 family.</text>
</comment>
<proteinExistence type="inferred from homology"/>
<feature type="chain" id="PRO_1000166229" description="Large ribosomal subunit protein uL18">
    <location>
        <begin position="1"/>
        <end position="117"/>
    </location>
</feature>
<sequence>MDKKSARIRRATRARRKLQELGATRLVVHRTPRHIYAQVIAPNGSEVLVAASTVEKAIAEQLKYTGNKDAAAAVGKAVAERALEKGIKDVSFDRSGFQYHGRVQALADAAREAGLQF</sequence>
<protein>
    <recommendedName>
        <fullName evidence="1">Large ribosomal subunit protein uL18</fullName>
    </recommendedName>
    <alternativeName>
        <fullName evidence="2">50S ribosomal protein L18</fullName>
    </alternativeName>
</protein>
<gene>
    <name evidence="1" type="primary">rplR</name>
    <name type="ordered locus">E2348C_3567</name>
</gene>
<dbReference type="EMBL" id="FM180568">
    <property type="protein sequence ID" value="CAS11115.1"/>
    <property type="molecule type" value="Genomic_DNA"/>
</dbReference>
<dbReference type="RefSeq" id="WP_000358960.1">
    <property type="nucleotide sequence ID" value="NC_011601.1"/>
</dbReference>
<dbReference type="SMR" id="B7UK28"/>
<dbReference type="GeneID" id="98390426"/>
<dbReference type="KEGG" id="ecg:E2348C_3567"/>
<dbReference type="HOGENOM" id="CLU_098841_0_1_6"/>
<dbReference type="Proteomes" id="UP000008205">
    <property type="component" value="Chromosome"/>
</dbReference>
<dbReference type="GO" id="GO:0022625">
    <property type="term" value="C:cytosolic large ribosomal subunit"/>
    <property type="evidence" value="ECO:0007669"/>
    <property type="project" value="TreeGrafter"/>
</dbReference>
<dbReference type="GO" id="GO:0008097">
    <property type="term" value="F:5S rRNA binding"/>
    <property type="evidence" value="ECO:0007669"/>
    <property type="project" value="TreeGrafter"/>
</dbReference>
<dbReference type="GO" id="GO:0003735">
    <property type="term" value="F:structural constituent of ribosome"/>
    <property type="evidence" value="ECO:0007669"/>
    <property type="project" value="InterPro"/>
</dbReference>
<dbReference type="GO" id="GO:0006412">
    <property type="term" value="P:translation"/>
    <property type="evidence" value="ECO:0007669"/>
    <property type="project" value="UniProtKB-UniRule"/>
</dbReference>
<dbReference type="CDD" id="cd00432">
    <property type="entry name" value="Ribosomal_L18_L5e"/>
    <property type="match status" value="1"/>
</dbReference>
<dbReference type="FunFam" id="3.30.420.100:FF:000001">
    <property type="entry name" value="50S ribosomal protein L18"/>
    <property type="match status" value="1"/>
</dbReference>
<dbReference type="Gene3D" id="3.30.420.100">
    <property type="match status" value="1"/>
</dbReference>
<dbReference type="HAMAP" id="MF_01337_B">
    <property type="entry name" value="Ribosomal_uL18_B"/>
    <property type="match status" value="1"/>
</dbReference>
<dbReference type="InterPro" id="IPR004389">
    <property type="entry name" value="Ribosomal_uL18_bac-type"/>
</dbReference>
<dbReference type="InterPro" id="IPR005484">
    <property type="entry name" value="Ribosomal_uL18_bac/euk"/>
</dbReference>
<dbReference type="NCBIfam" id="TIGR00060">
    <property type="entry name" value="L18_bact"/>
    <property type="match status" value="1"/>
</dbReference>
<dbReference type="PANTHER" id="PTHR12899">
    <property type="entry name" value="39S RIBOSOMAL PROTEIN L18, MITOCHONDRIAL"/>
    <property type="match status" value="1"/>
</dbReference>
<dbReference type="PANTHER" id="PTHR12899:SF3">
    <property type="entry name" value="LARGE RIBOSOMAL SUBUNIT PROTEIN UL18M"/>
    <property type="match status" value="1"/>
</dbReference>
<dbReference type="Pfam" id="PF00861">
    <property type="entry name" value="Ribosomal_L18p"/>
    <property type="match status" value="1"/>
</dbReference>
<dbReference type="SUPFAM" id="SSF53137">
    <property type="entry name" value="Translational machinery components"/>
    <property type="match status" value="1"/>
</dbReference>
<organism>
    <name type="scientific">Escherichia coli O127:H6 (strain E2348/69 / EPEC)</name>
    <dbReference type="NCBI Taxonomy" id="574521"/>
    <lineage>
        <taxon>Bacteria</taxon>
        <taxon>Pseudomonadati</taxon>
        <taxon>Pseudomonadota</taxon>
        <taxon>Gammaproteobacteria</taxon>
        <taxon>Enterobacterales</taxon>
        <taxon>Enterobacteriaceae</taxon>
        <taxon>Escherichia</taxon>
    </lineage>
</organism>